<proteinExistence type="inferred from homology"/>
<organism>
    <name type="scientific">Shigella boydii serotype 4 (strain Sb227)</name>
    <dbReference type="NCBI Taxonomy" id="300268"/>
    <lineage>
        <taxon>Bacteria</taxon>
        <taxon>Pseudomonadati</taxon>
        <taxon>Pseudomonadota</taxon>
        <taxon>Gammaproteobacteria</taxon>
        <taxon>Enterobacterales</taxon>
        <taxon>Enterobacteriaceae</taxon>
        <taxon>Shigella</taxon>
    </lineage>
</organism>
<comment type="function">
    <text evidence="1">Activator of cell division through the inhibition of FtsZ GTPase activity, therefore promoting FtsZ assembly into bundles of protofilaments necessary for the formation of the division Z ring. It is recruited early at mid-cell but it is not essential for cell division.</text>
</comment>
<comment type="subunit">
    <text evidence="1">Homodimer. Interacts with FtsZ.</text>
</comment>
<comment type="subcellular location">
    <subcellularLocation>
        <location evidence="1">Cytoplasm</location>
    </subcellularLocation>
    <text evidence="1">Localizes at mid-cell.</text>
</comment>
<comment type="similarity">
    <text evidence="1">Belongs to the ZapA family. Type 1 subfamily.</text>
</comment>
<evidence type="ECO:0000255" key="1">
    <source>
        <dbReference type="HAMAP-Rule" id="MF_02012"/>
    </source>
</evidence>
<reference key="1">
    <citation type="journal article" date="2005" name="Nucleic Acids Res.">
        <title>Genome dynamics and diversity of Shigella species, the etiologic agents of bacillary dysentery.</title>
        <authorList>
            <person name="Yang F."/>
            <person name="Yang J."/>
            <person name="Zhang X."/>
            <person name="Chen L."/>
            <person name="Jiang Y."/>
            <person name="Yan Y."/>
            <person name="Tang X."/>
            <person name="Wang J."/>
            <person name="Xiong Z."/>
            <person name="Dong J."/>
            <person name="Xue Y."/>
            <person name="Zhu Y."/>
            <person name="Xu X."/>
            <person name="Sun L."/>
            <person name="Chen S."/>
            <person name="Nie H."/>
            <person name="Peng J."/>
            <person name="Xu J."/>
            <person name="Wang Y."/>
            <person name="Yuan Z."/>
            <person name="Wen Y."/>
            <person name="Yao Z."/>
            <person name="Shen Y."/>
            <person name="Qiang B."/>
            <person name="Hou Y."/>
            <person name="Yu J."/>
            <person name="Jin Q."/>
        </authorList>
    </citation>
    <scope>NUCLEOTIDE SEQUENCE [LARGE SCALE GENOMIC DNA]</scope>
    <source>
        <strain>Sb227</strain>
    </source>
</reference>
<feature type="chain" id="PRO_0000345660" description="Cell division protein ZapA">
    <location>
        <begin position="1"/>
        <end position="109"/>
    </location>
</feature>
<feature type="coiled-coil region" evidence="1">
    <location>
        <begin position="21"/>
        <end position="99"/>
    </location>
</feature>
<keyword id="KW-0131">Cell cycle</keyword>
<keyword id="KW-0132">Cell division</keyword>
<keyword id="KW-0175">Coiled coil</keyword>
<keyword id="KW-0963">Cytoplasm</keyword>
<keyword id="KW-0717">Septation</keyword>
<accession>Q31WH1</accession>
<gene>
    <name evidence="1" type="primary">zapA</name>
    <name type="ordered locus">SBO_3082</name>
</gene>
<dbReference type="EMBL" id="CP000036">
    <property type="protein sequence ID" value="ABB67587.1"/>
    <property type="molecule type" value="Genomic_DNA"/>
</dbReference>
<dbReference type="RefSeq" id="WP_001276008.1">
    <property type="nucleotide sequence ID" value="NC_007613.1"/>
</dbReference>
<dbReference type="SMR" id="Q31WH1"/>
<dbReference type="GeneID" id="93779091"/>
<dbReference type="KEGG" id="sbo:SBO_3082"/>
<dbReference type="HOGENOM" id="CLU_116623_3_0_6"/>
<dbReference type="Proteomes" id="UP000007067">
    <property type="component" value="Chromosome"/>
</dbReference>
<dbReference type="GO" id="GO:0032153">
    <property type="term" value="C:cell division site"/>
    <property type="evidence" value="ECO:0007669"/>
    <property type="project" value="TreeGrafter"/>
</dbReference>
<dbReference type="GO" id="GO:0030428">
    <property type="term" value="C:cell septum"/>
    <property type="evidence" value="ECO:0007669"/>
    <property type="project" value="TreeGrafter"/>
</dbReference>
<dbReference type="GO" id="GO:0005829">
    <property type="term" value="C:cytosol"/>
    <property type="evidence" value="ECO:0007669"/>
    <property type="project" value="TreeGrafter"/>
</dbReference>
<dbReference type="GO" id="GO:0005886">
    <property type="term" value="C:plasma membrane"/>
    <property type="evidence" value="ECO:0007669"/>
    <property type="project" value="UniProtKB-UniRule"/>
</dbReference>
<dbReference type="GO" id="GO:0000917">
    <property type="term" value="P:division septum assembly"/>
    <property type="evidence" value="ECO:0007669"/>
    <property type="project" value="UniProtKB-KW"/>
</dbReference>
<dbReference type="GO" id="GO:0043093">
    <property type="term" value="P:FtsZ-dependent cytokinesis"/>
    <property type="evidence" value="ECO:0007669"/>
    <property type="project" value="TreeGrafter"/>
</dbReference>
<dbReference type="GO" id="GO:0000921">
    <property type="term" value="P:septin ring assembly"/>
    <property type="evidence" value="ECO:0007669"/>
    <property type="project" value="TreeGrafter"/>
</dbReference>
<dbReference type="FunFam" id="1.20.5.50:FF:000001">
    <property type="entry name" value="Cell division protein ZapA"/>
    <property type="match status" value="1"/>
</dbReference>
<dbReference type="FunFam" id="3.30.160.880:FF:000001">
    <property type="entry name" value="Cell division protein ZapA"/>
    <property type="match status" value="1"/>
</dbReference>
<dbReference type="Gene3D" id="1.20.5.50">
    <property type="match status" value="1"/>
</dbReference>
<dbReference type="Gene3D" id="3.30.160.880">
    <property type="entry name" value="Cell division protein ZapA protomer, N-terminal domain"/>
    <property type="match status" value="1"/>
</dbReference>
<dbReference type="HAMAP" id="MF_02012">
    <property type="entry name" value="ZapA_type1"/>
    <property type="match status" value="1"/>
</dbReference>
<dbReference type="InterPro" id="IPR007838">
    <property type="entry name" value="Cell_div_ZapA-like"/>
</dbReference>
<dbReference type="InterPro" id="IPR036192">
    <property type="entry name" value="Cell_div_ZapA-like_sf"/>
</dbReference>
<dbReference type="InterPro" id="IPR023771">
    <property type="entry name" value="Cell_div_ZapA_eubact"/>
</dbReference>
<dbReference type="InterPro" id="IPR042233">
    <property type="entry name" value="Cell_div_ZapA_N"/>
</dbReference>
<dbReference type="NCBIfam" id="NF008209">
    <property type="entry name" value="PRK10972.1"/>
    <property type="match status" value="1"/>
</dbReference>
<dbReference type="PANTHER" id="PTHR34981">
    <property type="entry name" value="CELL DIVISION PROTEIN ZAPA"/>
    <property type="match status" value="1"/>
</dbReference>
<dbReference type="PANTHER" id="PTHR34981:SF1">
    <property type="entry name" value="CELL DIVISION PROTEIN ZAPA"/>
    <property type="match status" value="1"/>
</dbReference>
<dbReference type="Pfam" id="PF05164">
    <property type="entry name" value="ZapA"/>
    <property type="match status" value="1"/>
</dbReference>
<dbReference type="SUPFAM" id="SSF102829">
    <property type="entry name" value="Cell division protein ZapA-like"/>
    <property type="match status" value="1"/>
</dbReference>
<sequence>MSAQPVDIQIFGRSLRVNCPPDQRDALNQAADDLNQRLQDLKERTRVTNTEQLVFIAALNISYELAQEKAKTRDYAASMEQRIRMLQQTIEQALLEQGRITEKTNQNFE</sequence>
<name>ZAPA_SHIBS</name>
<protein>
    <recommendedName>
        <fullName evidence="1">Cell division protein ZapA</fullName>
    </recommendedName>
    <alternativeName>
        <fullName evidence="1">Z ring-associated protein ZapA</fullName>
    </alternativeName>
</protein>